<name>NAGZ_NITMU</name>
<dbReference type="EC" id="3.2.1.52" evidence="1"/>
<dbReference type="EMBL" id="CP000103">
    <property type="protein sequence ID" value="ABB75058.1"/>
    <property type="molecule type" value="Genomic_DNA"/>
</dbReference>
<dbReference type="RefSeq" id="WP_011381078.1">
    <property type="nucleotide sequence ID" value="NC_007614.1"/>
</dbReference>
<dbReference type="SMR" id="Q2Y863"/>
<dbReference type="STRING" id="323848.Nmul_A1761"/>
<dbReference type="CAZy" id="GH3">
    <property type="family name" value="Glycoside Hydrolase Family 3"/>
</dbReference>
<dbReference type="KEGG" id="nmu:Nmul_A1761"/>
<dbReference type="eggNOG" id="COG1472">
    <property type="taxonomic scope" value="Bacteria"/>
</dbReference>
<dbReference type="HOGENOM" id="CLU_008392_0_0_4"/>
<dbReference type="OrthoDB" id="9786661at2"/>
<dbReference type="UniPathway" id="UPA00544"/>
<dbReference type="Proteomes" id="UP000002718">
    <property type="component" value="Chromosome"/>
</dbReference>
<dbReference type="GO" id="GO:0005737">
    <property type="term" value="C:cytoplasm"/>
    <property type="evidence" value="ECO:0007669"/>
    <property type="project" value="UniProtKB-SubCell"/>
</dbReference>
<dbReference type="GO" id="GO:0004563">
    <property type="term" value="F:beta-N-acetylhexosaminidase activity"/>
    <property type="evidence" value="ECO:0007669"/>
    <property type="project" value="UniProtKB-UniRule"/>
</dbReference>
<dbReference type="GO" id="GO:0005975">
    <property type="term" value="P:carbohydrate metabolic process"/>
    <property type="evidence" value="ECO:0007669"/>
    <property type="project" value="InterPro"/>
</dbReference>
<dbReference type="GO" id="GO:0051301">
    <property type="term" value="P:cell division"/>
    <property type="evidence" value="ECO:0007669"/>
    <property type="project" value="UniProtKB-KW"/>
</dbReference>
<dbReference type="GO" id="GO:0071555">
    <property type="term" value="P:cell wall organization"/>
    <property type="evidence" value="ECO:0007669"/>
    <property type="project" value="UniProtKB-KW"/>
</dbReference>
<dbReference type="GO" id="GO:0009252">
    <property type="term" value="P:peptidoglycan biosynthetic process"/>
    <property type="evidence" value="ECO:0007669"/>
    <property type="project" value="UniProtKB-KW"/>
</dbReference>
<dbReference type="GO" id="GO:0009254">
    <property type="term" value="P:peptidoglycan turnover"/>
    <property type="evidence" value="ECO:0007669"/>
    <property type="project" value="UniProtKB-UniRule"/>
</dbReference>
<dbReference type="GO" id="GO:0008360">
    <property type="term" value="P:regulation of cell shape"/>
    <property type="evidence" value="ECO:0007669"/>
    <property type="project" value="UniProtKB-KW"/>
</dbReference>
<dbReference type="Gene3D" id="3.20.20.300">
    <property type="entry name" value="Glycoside hydrolase, family 3, N-terminal domain"/>
    <property type="match status" value="1"/>
</dbReference>
<dbReference type="HAMAP" id="MF_00364">
    <property type="entry name" value="NagZ"/>
    <property type="match status" value="1"/>
</dbReference>
<dbReference type="InterPro" id="IPR022956">
    <property type="entry name" value="Beta_hexosaminidase_bac"/>
</dbReference>
<dbReference type="InterPro" id="IPR019800">
    <property type="entry name" value="Glyco_hydro_3_AS"/>
</dbReference>
<dbReference type="InterPro" id="IPR001764">
    <property type="entry name" value="Glyco_hydro_3_N"/>
</dbReference>
<dbReference type="InterPro" id="IPR036962">
    <property type="entry name" value="Glyco_hydro_3_N_sf"/>
</dbReference>
<dbReference type="InterPro" id="IPR017853">
    <property type="entry name" value="Glycoside_hydrolase_SF"/>
</dbReference>
<dbReference type="InterPro" id="IPR050226">
    <property type="entry name" value="NagZ_Beta-hexosaminidase"/>
</dbReference>
<dbReference type="NCBIfam" id="NF003740">
    <property type="entry name" value="PRK05337.1"/>
    <property type="match status" value="1"/>
</dbReference>
<dbReference type="PANTHER" id="PTHR30480:SF13">
    <property type="entry name" value="BETA-HEXOSAMINIDASE"/>
    <property type="match status" value="1"/>
</dbReference>
<dbReference type="PANTHER" id="PTHR30480">
    <property type="entry name" value="BETA-HEXOSAMINIDASE-RELATED"/>
    <property type="match status" value="1"/>
</dbReference>
<dbReference type="Pfam" id="PF00933">
    <property type="entry name" value="Glyco_hydro_3"/>
    <property type="match status" value="1"/>
</dbReference>
<dbReference type="SUPFAM" id="SSF51445">
    <property type="entry name" value="(Trans)glycosidases"/>
    <property type="match status" value="1"/>
</dbReference>
<dbReference type="PROSITE" id="PS00775">
    <property type="entry name" value="GLYCOSYL_HYDROL_F3"/>
    <property type="match status" value="1"/>
</dbReference>
<reference key="1">
    <citation type="submission" date="2005-08" db="EMBL/GenBank/DDBJ databases">
        <title>Complete sequence of chromosome 1 of Nitrosospira multiformis ATCC 25196.</title>
        <authorList>
            <person name="Copeland A."/>
            <person name="Lucas S."/>
            <person name="Lapidus A."/>
            <person name="Barry K."/>
            <person name="Detter J.C."/>
            <person name="Glavina T."/>
            <person name="Hammon N."/>
            <person name="Israni S."/>
            <person name="Pitluck S."/>
            <person name="Chain P."/>
            <person name="Malfatti S."/>
            <person name="Shin M."/>
            <person name="Vergez L."/>
            <person name="Schmutz J."/>
            <person name="Larimer F."/>
            <person name="Land M."/>
            <person name="Hauser L."/>
            <person name="Kyrpides N."/>
            <person name="Lykidis A."/>
            <person name="Richardson P."/>
        </authorList>
    </citation>
    <scope>NUCLEOTIDE SEQUENCE [LARGE SCALE GENOMIC DNA]</scope>
    <source>
        <strain>ATCC 25196 / NCIMB 11849 / C 71</strain>
    </source>
</reference>
<accession>Q2Y863</accession>
<feature type="chain" id="PRO_0000234919" description="Beta-hexosaminidase">
    <location>
        <begin position="1"/>
        <end position="349"/>
    </location>
</feature>
<feature type="active site" description="Proton donor/acceptor" evidence="1">
    <location>
        <position position="181"/>
    </location>
</feature>
<feature type="active site" description="Nucleophile" evidence="1">
    <location>
        <position position="252"/>
    </location>
</feature>
<feature type="binding site" evidence="1">
    <location>
        <position position="64"/>
    </location>
    <ligand>
        <name>substrate</name>
    </ligand>
</feature>
<feature type="binding site" evidence="1">
    <location>
        <position position="72"/>
    </location>
    <ligand>
        <name>substrate</name>
    </ligand>
</feature>
<feature type="binding site" evidence="1">
    <location>
        <position position="138"/>
    </location>
    <ligand>
        <name>substrate</name>
    </ligand>
</feature>
<feature type="binding site" evidence="1">
    <location>
        <begin position="168"/>
        <end position="169"/>
    </location>
    <ligand>
        <name>substrate</name>
    </ligand>
</feature>
<feature type="site" description="Important for catalytic activity" evidence="1">
    <location>
        <position position="179"/>
    </location>
</feature>
<evidence type="ECO:0000255" key="1">
    <source>
        <dbReference type="HAMAP-Rule" id="MF_00364"/>
    </source>
</evidence>
<keyword id="KW-0131">Cell cycle</keyword>
<keyword id="KW-0132">Cell division</keyword>
<keyword id="KW-0133">Cell shape</keyword>
<keyword id="KW-0961">Cell wall biogenesis/degradation</keyword>
<keyword id="KW-0963">Cytoplasm</keyword>
<keyword id="KW-0326">Glycosidase</keyword>
<keyword id="KW-0378">Hydrolase</keyword>
<keyword id="KW-0573">Peptidoglycan synthesis</keyword>
<keyword id="KW-1185">Reference proteome</keyword>
<gene>
    <name evidence="1" type="primary">nagZ</name>
    <name type="ordered locus">Nmul_A1761</name>
</gene>
<protein>
    <recommendedName>
        <fullName evidence="1">Beta-hexosaminidase</fullName>
        <ecNumber evidence="1">3.2.1.52</ecNumber>
    </recommendedName>
    <alternativeName>
        <fullName evidence="1">Beta-N-acetylhexosaminidase</fullName>
    </alternativeName>
    <alternativeName>
        <fullName evidence="1">N-acetyl-beta-glucosaminidase</fullName>
    </alternativeName>
</protein>
<comment type="function">
    <text evidence="1">Plays a role in peptidoglycan recycling by cleaving the terminal beta-1,4-linked N-acetylglucosamine (GlcNAc) from peptide-linked peptidoglycan fragments, giving rise to free GlcNAc, anhydro-N-acetylmuramic acid and anhydro-N-acetylmuramic acid-linked peptides.</text>
</comment>
<comment type="catalytic activity">
    <reaction evidence="1">
        <text>Hydrolysis of terminal non-reducing N-acetyl-D-hexosamine residues in N-acetyl-beta-D-hexosaminides.</text>
        <dbReference type="EC" id="3.2.1.52"/>
    </reaction>
</comment>
<comment type="pathway">
    <text evidence="1">Cell wall biogenesis; peptidoglycan recycling.</text>
</comment>
<comment type="subcellular location">
    <subcellularLocation>
        <location evidence="1">Cytoplasm</location>
    </subcellularLocation>
</comment>
<comment type="similarity">
    <text evidence="1">Belongs to the glycosyl hydrolase 3 family. NagZ subfamily.</text>
</comment>
<proteinExistence type="inferred from homology"/>
<sequence length="349" mass="38354">MSLGPVILDIEGTQLTANDKKKLRHPLVGGVILFTRNYSSLAQLMHLTAEIHALRTPPLLVAVDHEGGRVQRFREDFTRLPPMRELGRIWDEHPAQARHLAHEAGYVLAAELRAAGVDFSFTPVLDMDYGQSSVIRDRAFHRDPQAIAELAHSLMSGLKSAGMAAVGKHFPGHGYIEADSHFEMPVDERTYAQIEMDDLIPFRKMIGFGLTGMMPAHVIYPKVDALPAGFSEVWLKKVLRGELGFEGCIFSDDLNMAGAAFAGNPVERAQKALHAGCDMVLLCNNPEAAEMLLAELHWDLPALGVIRLARMRGRPNPDSLVKLHENPNFVSAVEKIAGIGVRSGELPLV</sequence>
<organism>
    <name type="scientific">Nitrosospira multiformis (strain ATCC 25196 / NCIMB 11849 / C 71)</name>
    <dbReference type="NCBI Taxonomy" id="323848"/>
    <lineage>
        <taxon>Bacteria</taxon>
        <taxon>Pseudomonadati</taxon>
        <taxon>Pseudomonadota</taxon>
        <taxon>Betaproteobacteria</taxon>
        <taxon>Nitrosomonadales</taxon>
        <taxon>Nitrosomonadaceae</taxon>
        <taxon>Nitrosospira</taxon>
    </lineage>
</organism>